<sequence length="172" mass="18535">MPRVKVFFDITIGGKKGGRIVMELYNDIVPKTAENFRALCTGEKGKGKSGKKLHFKGSKFHRIIPEFMIQGGDFTEGNGTGGESIHGEKFDDENFKEKHTGPGVLSMANCGANTNGSQFFLCTVKTTWLDGKHVVFGKVIEGMDVVKAIESKGSEDGAPSAPCVIADCGEMK</sequence>
<proteinExistence type="evidence at transcript level"/>
<dbReference type="EC" id="5.2.1.8"/>
<dbReference type="EMBL" id="U34354">
    <property type="protein sequence ID" value="AAC47127.1"/>
    <property type="molecule type" value="mRNA"/>
</dbReference>
<dbReference type="EMBL" id="Z92822">
    <property type="protein sequence ID" value="CAB07303.1"/>
    <property type="molecule type" value="Genomic_DNA"/>
</dbReference>
<dbReference type="PIR" id="T27882">
    <property type="entry name" value="T27882"/>
</dbReference>
<dbReference type="RefSeq" id="NP_499828.1">
    <property type="nucleotide sequence ID" value="NM_067427.6"/>
</dbReference>
<dbReference type="SMR" id="P52010"/>
<dbReference type="BioGRID" id="41973">
    <property type="interactions" value="2"/>
</dbReference>
<dbReference type="FunCoup" id="P52010">
    <property type="interactions" value="747"/>
</dbReference>
<dbReference type="IntAct" id="P52010">
    <property type="interactions" value="1"/>
</dbReference>
<dbReference type="STRING" id="6239.ZK520.5.1"/>
<dbReference type="PaxDb" id="6239-ZK520.5"/>
<dbReference type="PeptideAtlas" id="P52010"/>
<dbReference type="EnsemblMetazoa" id="ZK520.5.1">
    <property type="protein sequence ID" value="ZK520.5.1"/>
    <property type="gene ID" value="WBGene00000878"/>
</dbReference>
<dbReference type="GeneID" id="176807"/>
<dbReference type="KEGG" id="cel:CELE_ZK520.5"/>
<dbReference type="UCSC" id="ZK520.5.1">
    <property type="organism name" value="c. elegans"/>
</dbReference>
<dbReference type="AGR" id="WB:WBGene00000878"/>
<dbReference type="CTD" id="176807"/>
<dbReference type="WormBase" id="ZK520.5">
    <property type="protein sequence ID" value="CE16730"/>
    <property type="gene ID" value="WBGene00000878"/>
    <property type="gene designation" value="cyn-2"/>
</dbReference>
<dbReference type="eggNOG" id="KOG0865">
    <property type="taxonomic scope" value="Eukaryota"/>
</dbReference>
<dbReference type="GeneTree" id="ENSGT00940000168914"/>
<dbReference type="HOGENOM" id="CLU_012062_4_2_1"/>
<dbReference type="InParanoid" id="P52010"/>
<dbReference type="OMA" id="APCVIAD"/>
<dbReference type="OrthoDB" id="193499at2759"/>
<dbReference type="PhylomeDB" id="P52010"/>
<dbReference type="PRO" id="PR:P52010"/>
<dbReference type="Proteomes" id="UP000001940">
    <property type="component" value="Chromosome III"/>
</dbReference>
<dbReference type="Bgee" id="WBGene00000878">
    <property type="expression patterns" value="Expressed in adult organism and 4 other cell types or tissues"/>
</dbReference>
<dbReference type="GO" id="GO:0005737">
    <property type="term" value="C:cytoplasm"/>
    <property type="evidence" value="ECO:0000318"/>
    <property type="project" value="GO_Central"/>
</dbReference>
<dbReference type="GO" id="GO:0016018">
    <property type="term" value="F:cyclosporin A binding"/>
    <property type="evidence" value="ECO:0000318"/>
    <property type="project" value="GO_Central"/>
</dbReference>
<dbReference type="GO" id="GO:0003755">
    <property type="term" value="F:peptidyl-prolyl cis-trans isomerase activity"/>
    <property type="evidence" value="ECO:0000318"/>
    <property type="project" value="GO_Central"/>
</dbReference>
<dbReference type="GO" id="GO:0006457">
    <property type="term" value="P:protein folding"/>
    <property type="evidence" value="ECO:0000318"/>
    <property type="project" value="GO_Central"/>
</dbReference>
<dbReference type="CDD" id="cd01926">
    <property type="entry name" value="cyclophilin_ABH_like"/>
    <property type="match status" value="1"/>
</dbReference>
<dbReference type="FunFam" id="2.40.100.10:FF:000002">
    <property type="entry name" value="Peptidyl-prolyl cis-trans isomerase"/>
    <property type="match status" value="1"/>
</dbReference>
<dbReference type="Gene3D" id="2.40.100.10">
    <property type="entry name" value="Cyclophilin-like"/>
    <property type="match status" value="1"/>
</dbReference>
<dbReference type="InterPro" id="IPR029000">
    <property type="entry name" value="Cyclophilin-like_dom_sf"/>
</dbReference>
<dbReference type="InterPro" id="IPR024936">
    <property type="entry name" value="Cyclophilin-type_PPIase"/>
</dbReference>
<dbReference type="InterPro" id="IPR020892">
    <property type="entry name" value="Cyclophilin-type_PPIase_CS"/>
</dbReference>
<dbReference type="InterPro" id="IPR002130">
    <property type="entry name" value="Cyclophilin-type_PPIase_dom"/>
</dbReference>
<dbReference type="PANTHER" id="PTHR11071">
    <property type="entry name" value="PEPTIDYL-PROLYL CIS-TRANS ISOMERASE"/>
    <property type="match status" value="1"/>
</dbReference>
<dbReference type="PANTHER" id="PTHR11071:SF222">
    <property type="entry name" value="PEPTIDYL-PROLYL CIS-TRANS ISOMERASE 2"/>
    <property type="match status" value="1"/>
</dbReference>
<dbReference type="Pfam" id="PF00160">
    <property type="entry name" value="Pro_isomerase"/>
    <property type="match status" value="1"/>
</dbReference>
<dbReference type="PIRSF" id="PIRSF001467">
    <property type="entry name" value="Peptidylpro_ismrse"/>
    <property type="match status" value="1"/>
</dbReference>
<dbReference type="PRINTS" id="PR00153">
    <property type="entry name" value="CSAPPISMRASE"/>
</dbReference>
<dbReference type="SUPFAM" id="SSF50891">
    <property type="entry name" value="Cyclophilin-like"/>
    <property type="match status" value="1"/>
</dbReference>
<dbReference type="PROSITE" id="PS00170">
    <property type="entry name" value="CSA_PPIASE_1"/>
    <property type="match status" value="1"/>
</dbReference>
<dbReference type="PROSITE" id="PS50072">
    <property type="entry name" value="CSA_PPIASE_2"/>
    <property type="match status" value="1"/>
</dbReference>
<evidence type="ECO:0000255" key="1">
    <source>
        <dbReference type="PROSITE-ProRule" id="PRU00156"/>
    </source>
</evidence>
<evidence type="ECO:0000305" key="2"/>
<organism>
    <name type="scientific">Caenorhabditis elegans</name>
    <dbReference type="NCBI Taxonomy" id="6239"/>
    <lineage>
        <taxon>Eukaryota</taxon>
        <taxon>Metazoa</taxon>
        <taxon>Ecdysozoa</taxon>
        <taxon>Nematoda</taxon>
        <taxon>Chromadorea</taxon>
        <taxon>Rhabditida</taxon>
        <taxon>Rhabditina</taxon>
        <taxon>Rhabditomorpha</taxon>
        <taxon>Rhabditoidea</taxon>
        <taxon>Rhabditidae</taxon>
        <taxon>Peloderinae</taxon>
        <taxon>Caenorhabditis</taxon>
    </lineage>
</organism>
<feature type="chain" id="PRO_0000064191" description="Peptidyl-prolyl cis-trans isomerase 2">
    <location>
        <begin position="1"/>
        <end position="172"/>
    </location>
</feature>
<feature type="domain" description="PPIase cyclophilin-type" evidence="1">
    <location>
        <begin position="7"/>
        <end position="170"/>
    </location>
</feature>
<feature type="sequence conflict" description="In Ref. 1; AAC47127." evidence="2" ref="1">
    <original>F</original>
    <variation>I</variation>
    <location>
        <position position="8"/>
    </location>
</feature>
<feature type="sequence conflict" description="In Ref. 1; AAC47127." evidence="2" ref="1">
    <original>V</original>
    <variation>A</variation>
    <location>
        <position position="29"/>
    </location>
</feature>
<feature type="sequence conflict" description="In Ref. 1; AAC47127." evidence="2" ref="1">
    <location>
        <position position="82"/>
    </location>
</feature>
<protein>
    <recommendedName>
        <fullName>Peptidyl-prolyl cis-trans isomerase 2</fullName>
        <shortName>PPIase 2</shortName>
        <ecNumber>5.2.1.8</ecNumber>
    </recommendedName>
    <alternativeName>
        <fullName>Cyclophilin-2</fullName>
    </alternativeName>
    <alternativeName>
        <fullName>Rotamase 2</fullName>
    </alternativeName>
</protein>
<accession>P52010</accession>
<accession>O46022</accession>
<comment type="function">
    <text>PPIases accelerate the folding of proteins. It catalyzes the cis-trans isomerization of proline imidic peptide bonds in oligopeptides.</text>
</comment>
<comment type="catalytic activity">
    <reaction>
        <text>[protein]-peptidylproline (omega=180) = [protein]-peptidylproline (omega=0)</text>
        <dbReference type="Rhea" id="RHEA:16237"/>
        <dbReference type="Rhea" id="RHEA-COMP:10747"/>
        <dbReference type="Rhea" id="RHEA-COMP:10748"/>
        <dbReference type="ChEBI" id="CHEBI:83833"/>
        <dbReference type="ChEBI" id="CHEBI:83834"/>
        <dbReference type="EC" id="5.2.1.8"/>
    </reaction>
</comment>
<comment type="similarity">
    <text evidence="2">Belongs to the cyclophilin-type PPIase family.</text>
</comment>
<keyword id="KW-0413">Isomerase</keyword>
<keyword id="KW-1185">Reference proteome</keyword>
<keyword id="KW-0697">Rotamase</keyword>
<gene>
    <name type="primary">cyn-2</name>
    <name type="synonym">cyp-2</name>
    <name type="ORF">ZK520.5</name>
</gene>
<reference key="1">
    <citation type="journal article" date="1996" name="Biochem. J.">
        <title>Cloning and biochemical characterization of the cyclophilin homologues from the free-living nematode Caenorhabditis elegans.</title>
        <authorList>
            <person name="Page A.P."/>
            <person name="Macniven K."/>
            <person name="Hengartner M.O."/>
        </authorList>
    </citation>
    <scope>NUCLEOTIDE SEQUENCE [MRNA]</scope>
    <source>
        <strain>Bristol N2</strain>
    </source>
</reference>
<reference key="2">
    <citation type="journal article" date="1998" name="Science">
        <title>Genome sequence of the nematode C. elegans: a platform for investigating biology.</title>
        <authorList>
            <consortium name="The C. elegans sequencing consortium"/>
        </authorList>
    </citation>
    <scope>NUCLEOTIDE SEQUENCE [LARGE SCALE GENOMIC DNA]</scope>
    <source>
        <strain>Bristol N2</strain>
    </source>
</reference>
<name>CYP2_CAEEL</name>